<name>Y1248_HAEIN</name>
<gene>
    <name type="ordered locus">HI_1248</name>
</gene>
<feature type="chain" id="PRO_0000194014" description="Putative nickel/cobalt efflux system HI_1248">
    <location>
        <begin position="1"/>
        <end position="322"/>
    </location>
</feature>
<feature type="transmembrane region" description="Helical" evidence="1">
    <location>
        <begin position="7"/>
        <end position="27"/>
    </location>
</feature>
<feature type="transmembrane region" description="Helical" evidence="1">
    <location>
        <begin position="54"/>
        <end position="74"/>
    </location>
</feature>
<feature type="transmembrane region" description="Helical" evidence="1">
    <location>
        <begin position="100"/>
        <end position="120"/>
    </location>
</feature>
<feature type="transmembrane region" description="Helical" evidence="1">
    <location>
        <begin position="137"/>
        <end position="157"/>
    </location>
</feature>
<feature type="transmembrane region" description="Helical" evidence="1">
    <location>
        <begin position="228"/>
        <end position="248"/>
    </location>
</feature>
<feature type="transmembrane region" description="Helical" evidence="1">
    <location>
        <begin position="294"/>
        <end position="314"/>
    </location>
</feature>
<proteinExistence type="inferred from homology"/>
<protein>
    <recommendedName>
        <fullName>Putative nickel/cobalt efflux system HI_1248</fullName>
    </recommendedName>
</protein>
<dbReference type="EMBL" id="L42023">
    <property type="protein sequence ID" value="AAC22907.1"/>
    <property type="molecule type" value="Genomic_DNA"/>
</dbReference>
<dbReference type="PIR" id="A64023">
    <property type="entry name" value="A64023"/>
</dbReference>
<dbReference type="RefSeq" id="NP_439404.1">
    <property type="nucleotide sequence ID" value="NC_000907.1"/>
</dbReference>
<dbReference type="STRING" id="71421.HI_1248"/>
<dbReference type="EnsemblBacteria" id="AAC22907">
    <property type="protein sequence ID" value="AAC22907"/>
    <property type="gene ID" value="HI_1248"/>
</dbReference>
<dbReference type="KEGG" id="hin:HI_1248"/>
<dbReference type="PATRIC" id="fig|71421.8.peg.1300"/>
<dbReference type="eggNOG" id="COG2215">
    <property type="taxonomic scope" value="Bacteria"/>
</dbReference>
<dbReference type="HOGENOM" id="CLU_058605_0_0_6"/>
<dbReference type="OrthoDB" id="9812956at2"/>
<dbReference type="PhylomeDB" id="P44136"/>
<dbReference type="BioCyc" id="HINF71421:G1GJ1-1279-MONOMER"/>
<dbReference type="Proteomes" id="UP000000579">
    <property type="component" value="Chromosome"/>
</dbReference>
<dbReference type="GO" id="GO:0005886">
    <property type="term" value="C:plasma membrane"/>
    <property type="evidence" value="ECO:0000318"/>
    <property type="project" value="GO_Central"/>
</dbReference>
<dbReference type="GO" id="GO:0015099">
    <property type="term" value="F:nickel cation transmembrane transporter activity"/>
    <property type="evidence" value="ECO:0000318"/>
    <property type="project" value="GO_Central"/>
</dbReference>
<dbReference type="GO" id="GO:0006824">
    <property type="term" value="P:cobalt ion transport"/>
    <property type="evidence" value="ECO:0007669"/>
    <property type="project" value="UniProtKB-KW"/>
</dbReference>
<dbReference type="GO" id="GO:0032025">
    <property type="term" value="P:response to cobalt ion"/>
    <property type="evidence" value="ECO:0000318"/>
    <property type="project" value="GO_Central"/>
</dbReference>
<dbReference type="GO" id="GO:0010045">
    <property type="term" value="P:response to nickel cation"/>
    <property type="evidence" value="ECO:0000318"/>
    <property type="project" value="GO_Central"/>
</dbReference>
<dbReference type="InterPro" id="IPR011541">
    <property type="entry name" value="Ni/Co_transpt_high_affinity"/>
</dbReference>
<dbReference type="InterPro" id="IPR051224">
    <property type="entry name" value="NiCoT_RcnA"/>
</dbReference>
<dbReference type="PANTHER" id="PTHR40659">
    <property type="entry name" value="NICKEL/COBALT EFFLUX SYSTEM RCNA"/>
    <property type="match status" value="1"/>
</dbReference>
<dbReference type="PANTHER" id="PTHR40659:SF1">
    <property type="entry name" value="NICKEL_COBALT EFFLUX SYSTEM RCNA"/>
    <property type="match status" value="1"/>
</dbReference>
<dbReference type="Pfam" id="PF03824">
    <property type="entry name" value="NicO"/>
    <property type="match status" value="1"/>
</dbReference>
<comment type="function">
    <text evidence="2">Efflux system for nickel and cobalt.</text>
</comment>
<comment type="subcellular location">
    <subcellularLocation>
        <location evidence="2">Cell membrane</location>
        <topology evidence="2">Multi-pass membrane protein</topology>
    </subcellularLocation>
</comment>
<comment type="similarity">
    <text evidence="2">Belongs to the NiCoT transporter (TC 2.A.52) family.</text>
</comment>
<sequence>MKKYKTGLVLLVIALALLVYFSPWFFLHIASWQKEFNQLISENLHQIQNNSIKAGTTLIFASFVYGVLHALGPGHGKFIIASYLSTHESQLKQSTILSLLSSLMQGIVAITATTLLVVVLNLSSRYFKLSQLWLERTALLLLVFLGCYWIWQGLRAYRKKAKLAIKSLNPLPLHEKSAVKNNRTFQPNTCSCGHQHLPSPTQTAQATNLKSQFLVILTIGMRPCSGAIFVLFLAYMLDLYSWGILAVLAMSFGTGLMLSAFAGIVRYARNTAIHLGHWYSSKNTKGKSESIVKLIAGGIMLFFALSLLYGTTISTGGSKILF</sequence>
<reference key="1">
    <citation type="journal article" date="1995" name="Science">
        <title>Whole-genome random sequencing and assembly of Haemophilus influenzae Rd.</title>
        <authorList>
            <person name="Fleischmann R.D."/>
            <person name="Adams M.D."/>
            <person name="White O."/>
            <person name="Clayton R.A."/>
            <person name="Kirkness E.F."/>
            <person name="Kerlavage A.R."/>
            <person name="Bult C.J."/>
            <person name="Tomb J.-F."/>
            <person name="Dougherty B.A."/>
            <person name="Merrick J.M."/>
            <person name="McKenney K."/>
            <person name="Sutton G.G."/>
            <person name="FitzHugh W."/>
            <person name="Fields C.A."/>
            <person name="Gocayne J.D."/>
            <person name="Scott J.D."/>
            <person name="Shirley R."/>
            <person name="Liu L.-I."/>
            <person name="Glodek A."/>
            <person name="Kelley J.M."/>
            <person name="Weidman J.F."/>
            <person name="Phillips C.A."/>
            <person name="Spriggs T."/>
            <person name="Hedblom E."/>
            <person name="Cotton M.D."/>
            <person name="Utterback T.R."/>
            <person name="Hanna M.C."/>
            <person name="Nguyen D.T."/>
            <person name="Saudek D.M."/>
            <person name="Brandon R.C."/>
            <person name="Fine L.D."/>
            <person name="Fritchman J.L."/>
            <person name="Fuhrmann J.L."/>
            <person name="Geoghagen N.S.M."/>
            <person name="Gnehm C.L."/>
            <person name="McDonald L.A."/>
            <person name="Small K.V."/>
            <person name="Fraser C.M."/>
            <person name="Smith H.O."/>
            <person name="Venter J.C."/>
        </authorList>
    </citation>
    <scope>NUCLEOTIDE SEQUENCE [LARGE SCALE GENOMIC DNA]</scope>
    <source>
        <strain>ATCC 51907 / DSM 11121 / KW20 / Rd</strain>
    </source>
</reference>
<organism>
    <name type="scientific">Haemophilus influenzae (strain ATCC 51907 / DSM 11121 / KW20 / Rd)</name>
    <dbReference type="NCBI Taxonomy" id="71421"/>
    <lineage>
        <taxon>Bacteria</taxon>
        <taxon>Pseudomonadati</taxon>
        <taxon>Pseudomonadota</taxon>
        <taxon>Gammaproteobacteria</taxon>
        <taxon>Pasteurellales</taxon>
        <taxon>Pasteurellaceae</taxon>
        <taxon>Haemophilus</taxon>
    </lineage>
</organism>
<accession>P44136</accession>
<keyword id="KW-1003">Cell membrane</keyword>
<keyword id="KW-0170">Cobalt</keyword>
<keyword id="KW-0171">Cobalt transport</keyword>
<keyword id="KW-0406">Ion transport</keyword>
<keyword id="KW-0472">Membrane</keyword>
<keyword id="KW-0533">Nickel</keyword>
<keyword id="KW-0921">Nickel transport</keyword>
<keyword id="KW-1185">Reference proteome</keyword>
<keyword id="KW-0812">Transmembrane</keyword>
<keyword id="KW-1133">Transmembrane helix</keyword>
<keyword id="KW-0813">Transport</keyword>
<evidence type="ECO:0000255" key="1"/>
<evidence type="ECO:0000305" key="2"/>